<name>MTAP_MYCMD</name>
<sequence length="315" mass="34081">MSVPTVTSWTGAPILLGVIGGSGLYKLDSITPVAEISISTPWGSASSPITIAKTSAGNHVAFLARHGRDHAILPSNVPNLANIAALKHLGVKAIVAFSAVGSLREEIAPKDFVIPSQIIDRTKGVRRASFFGFGDEESVVAHAGFGDPFCETLRPIVYSTVQATLASHPIKVHTDKTVVCMEGPQFSTRAESLMYRTWGGDIINMSVLPEAKLAREAEIAYVLIATATDYDAWRPSTAAVNVAEVMESLKANVEASNLVTTKVLDRVWLEIDTDEKPAVKNIKDSTKFSIMTKSQVIPDKAKQNLRFLHPWFARD</sequence>
<keyword id="KW-0963">Cytoplasm</keyword>
<keyword id="KW-0328">Glycosyltransferase</keyword>
<keyword id="KW-0539">Nucleus</keyword>
<keyword id="KW-0660">Purine salvage</keyword>
<keyword id="KW-1185">Reference proteome</keyword>
<keyword id="KW-0808">Transferase</keyword>
<evidence type="ECO:0000255" key="1">
    <source>
        <dbReference type="HAMAP-Rule" id="MF_03155"/>
    </source>
</evidence>
<reference key="1">
    <citation type="journal article" date="2006" name="Nature">
        <title>Insights from the genome of the biotrophic fungal plant pathogen Ustilago maydis.</title>
        <authorList>
            <person name="Kaemper J."/>
            <person name="Kahmann R."/>
            <person name="Boelker M."/>
            <person name="Ma L.-J."/>
            <person name="Brefort T."/>
            <person name="Saville B.J."/>
            <person name="Banuett F."/>
            <person name="Kronstad J.W."/>
            <person name="Gold S.E."/>
            <person name="Mueller O."/>
            <person name="Perlin M.H."/>
            <person name="Woesten H.A.B."/>
            <person name="de Vries R."/>
            <person name="Ruiz-Herrera J."/>
            <person name="Reynaga-Pena C.G."/>
            <person name="Snetselaar K."/>
            <person name="McCann M."/>
            <person name="Perez-Martin J."/>
            <person name="Feldbruegge M."/>
            <person name="Basse C.W."/>
            <person name="Steinberg G."/>
            <person name="Ibeas J.I."/>
            <person name="Holloman W."/>
            <person name="Guzman P."/>
            <person name="Farman M.L."/>
            <person name="Stajich J.E."/>
            <person name="Sentandreu R."/>
            <person name="Gonzalez-Prieto J.M."/>
            <person name="Kennell J.C."/>
            <person name="Molina L."/>
            <person name="Schirawski J."/>
            <person name="Mendoza-Mendoza A."/>
            <person name="Greilinger D."/>
            <person name="Muench K."/>
            <person name="Roessel N."/>
            <person name="Scherer M."/>
            <person name="Vranes M."/>
            <person name="Ladendorf O."/>
            <person name="Vincon V."/>
            <person name="Fuchs U."/>
            <person name="Sandrock B."/>
            <person name="Meng S."/>
            <person name="Ho E.C.H."/>
            <person name="Cahill M.J."/>
            <person name="Boyce K.J."/>
            <person name="Klose J."/>
            <person name="Klosterman S.J."/>
            <person name="Deelstra H.J."/>
            <person name="Ortiz-Castellanos L."/>
            <person name="Li W."/>
            <person name="Sanchez-Alonso P."/>
            <person name="Schreier P.H."/>
            <person name="Haeuser-Hahn I."/>
            <person name="Vaupel M."/>
            <person name="Koopmann E."/>
            <person name="Friedrich G."/>
            <person name="Voss H."/>
            <person name="Schlueter T."/>
            <person name="Margolis J."/>
            <person name="Platt D."/>
            <person name="Swimmer C."/>
            <person name="Gnirke A."/>
            <person name="Chen F."/>
            <person name="Vysotskaia V."/>
            <person name="Mannhaupt G."/>
            <person name="Gueldener U."/>
            <person name="Muensterkoetter M."/>
            <person name="Haase D."/>
            <person name="Oesterheld M."/>
            <person name="Mewes H.-W."/>
            <person name="Mauceli E.W."/>
            <person name="DeCaprio D."/>
            <person name="Wade C.M."/>
            <person name="Butler J."/>
            <person name="Young S.K."/>
            <person name="Jaffe D.B."/>
            <person name="Calvo S.E."/>
            <person name="Nusbaum C."/>
            <person name="Galagan J.E."/>
            <person name="Birren B.W."/>
        </authorList>
    </citation>
    <scope>NUCLEOTIDE SEQUENCE [LARGE SCALE GENOMIC DNA]</scope>
    <source>
        <strain>DSM 14603 / FGSC 9021 / UM521</strain>
    </source>
</reference>
<reference key="2">
    <citation type="submission" date="2014-09" db="EMBL/GenBank/DDBJ databases">
        <authorList>
            <person name="Gueldener U."/>
            <person name="Muensterkoetter M."/>
            <person name="Walter M.C."/>
            <person name="Mannhaupt G."/>
            <person name="Kahmann R."/>
        </authorList>
    </citation>
    <scope>GENOME REANNOTATION</scope>
    <source>
        <strain>DSM 14603 / FGSC 9021 / UM521</strain>
    </source>
</reference>
<accession>Q4PH43</accession>
<accession>A0A0D1CGT5</accession>
<feature type="chain" id="PRO_0000415137" description="S-methyl-5'-thioadenosine phosphorylase">
    <location>
        <begin position="1"/>
        <end position="315"/>
    </location>
</feature>
<feature type="binding site" evidence="1">
    <location>
        <position position="22"/>
    </location>
    <ligand>
        <name>phosphate</name>
        <dbReference type="ChEBI" id="CHEBI:43474"/>
    </ligand>
</feature>
<feature type="binding site" evidence="1">
    <location>
        <begin position="65"/>
        <end position="66"/>
    </location>
    <ligand>
        <name>phosphate</name>
        <dbReference type="ChEBI" id="CHEBI:43474"/>
    </ligand>
</feature>
<feature type="binding site" evidence="1">
    <location>
        <begin position="98"/>
        <end position="99"/>
    </location>
    <ligand>
        <name>phosphate</name>
        <dbReference type="ChEBI" id="CHEBI:43474"/>
    </ligand>
</feature>
<feature type="binding site" evidence="1">
    <location>
        <position position="205"/>
    </location>
    <ligand>
        <name>substrate</name>
    </ligand>
</feature>
<feature type="binding site" evidence="1">
    <location>
        <position position="206"/>
    </location>
    <ligand>
        <name>phosphate</name>
        <dbReference type="ChEBI" id="CHEBI:43474"/>
    </ligand>
</feature>
<feature type="binding site" evidence="1">
    <location>
        <begin position="229"/>
        <end position="231"/>
    </location>
    <ligand>
        <name>substrate</name>
    </ligand>
</feature>
<feature type="site" description="Important for substrate specificity" evidence="1">
    <location>
        <position position="187"/>
    </location>
</feature>
<feature type="site" description="Important for substrate specificity" evidence="1">
    <location>
        <position position="242"/>
    </location>
</feature>
<comment type="function">
    <text evidence="1">Catalyzes the reversible phosphorylation of S-methyl-5'-thioadenosine (MTA) to adenine and 5-methylthioribose-1-phosphate. Involved in the breakdown of MTA, a major by-product of polyamine biosynthesis. Responsible for the first step in the methionine salvage pathway after MTA has been generated from S-adenosylmethionine. Has broad substrate specificity with 6-aminopurine nucleosides as preferred substrates.</text>
</comment>
<comment type="catalytic activity">
    <reaction evidence="1">
        <text>S-methyl-5'-thioadenosine + phosphate = 5-(methylsulfanyl)-alpha-D-ribose 1-phosphate + adenine</text>
        <dbReference type="Rhea" id="RHEA:11852"/>
        <dbReference type="ChEBI" id="CHEBI:16708"/>
        <dbReference type="ChEBI" id="CHEBI:17509"/>
        <dbReference type="ChEBI" id="CHEBI:43474"/>
        <dbReference type="ChEBI" id="CHEBI:58533"/>
        <dbReference type="EC" id="2.4.2.28"/>
    </reaction>
</comment>
<comment type="pathway">
    <text evidence="1">Amino-acid biosynthesis; L-methionine biosynthesis via salvage pathway; S-methyl-5-thio-alpha-D-ribose 1-phosphate from S-methyl-5'-thioadenosine (phosphorylase route): step 1/1.</text>
</comment>
<comment type="subunit">
    <text evidence="1">Homotrimer.</text>
</comment>
<comment type="subcellular location">
    <subcellularLocation>
        <location evidence="1">Cytoplasm</location>
    </subcellularLocation>
    <subcellularLocation>
        <location evidence="1">Nucleus</location>
    </subcellularLocation>
</comment>
<comment type="similarity">
    <text evidence="1">Belongs to the PNP/MTAP phosphorylase family. MTAP subfamily.</text>
</comment>
<proteinExistence type="inferred from homology"/>
<dbReference type="EC" id="2.4.2.28" evidence="1"/>
<dbReference type="EMBL" id="CM003140">
    <property type="protein sequence ID" value="KIS72152.1"/>
    <property type="molecule type" value="Genomic_DNA"/>
</dbReference>
<dbReference type="RefSeq" id="XP_011386687.1">
    <property type="nucleotide sequence ID" value="XM_011388385.1"/>
</dbReference>
<dbReference type="SMR" id="Q4PH43"/>
<dbReference type="FunCoup" id="Q4PH43">
    <property type="interactions" value="286"/>
</dbReference>
<dbReference type="STRING" id="237631.Q4PH43"/>
<dbReference type="EnsemblFungi" id="KIS72152">
    <property type="protein sequence ID" value="KIS72152"/>
    <property type="gene ID" value="UMAG_10466"/>
</dbReference>
<dbReference type="GeneID" id="23566497"/>
<dbReference type="KEGG" id="uma:UMAG_10466"/>
<dbReference type="VEuPathDB" id="FungiDB:UMAG_10466"/>
<dbReference type="eggNOG" id="KOG3985">
    <property type="taxonomic scope" value="Eukaryota"/>
</dbReference>
<dbReference type="HOGENOM" id="CLU_054456_0_1_1"/>
<dbReference type="InParanoid" id="Q4PH43"/>
<dbReference type="OrthoDB" id="431409at2759"/>
<dbReference type="UniPathway" id="UPA00904">
    <property type="reaction ID" value="UER00873"/>
</dbReference>
<dbReference type="Proteomes" id="UP000000561">
    <property type="component" value="Chromosome 1"/>
</dbReference>
<dbReference type="GO" id="GO:0005829">
    <property type="term" value="C:cytosol"/>
    <property type="evidence" value="ECO:0000318"/>
    <property type="project" value="GO_Central"/>
</dbReference>
<dbReference type="GO" id="GO:0005634">
    <property type="term" value="C:nucleus"/>
    <property type="evidence" value="ECO:0007669"/>
    <property type="project" value="UniProtKB-SubCell"/>
</dbReference>
<dbReference type="GO" id="GO:0003729">
    <property type="term" value="F:mRNA binding"/>
    <property type="evidence" value="ECO:0007669"/>
    <property type="project" value="EnsemblFungi"/>
</dbReference>
<dbReference type="GO" id="GO:0017061">
    <property type="term" value="F:S-methyl-5-thioadenosine phosphorylase activity"/>
    <property type="evidence" value="ECO:0000318"/>
    <property type="project" value="GO_Central"/>
</dbReference>
<dbReference type="GO" id="GO:0006537">
    <property type="term" value="P:glutamate biosynthetic process"/>
    <property type="evidence" value="ECO:0007669"/>
    <property type="project" value="EnsemblFungi"/>
</dbReference>
<dbReference type="GO" id="GO:0019509">
    <property type="term" value="P:L-methionine salvage from methylthioadenosine"/>
    <property type="evidence" value="ECO:0000318"/>
    <property type="project" value="GO_Central"/>
</dbReference>
<dbReference type="GO" id="GO:0006166">
    <property type="term" value="P:purine ribonucleoside salvage"/>
    <property type="evidence" value="ECO:0007669"/>
    <property type="project" value="UniProtKB-KW"/>
</dbReference>
<dbReference type="CDD" id="cd09010">
    <property type="entry name" value="MTAP_SsMTAPII_like_MTIP"/>
    <property type="match status" value="1"/>
</dbReference>
<dbReference type="FunFam" id="3.40.50.1580:FF:000008">
    <property type="entry name" value="S-methyl-5'-thioadenosine phosphorylase"/>
    <property type="match status" value="1"/>
</dbReference>
<dbReference type="Gene3D" id="3.40.50.1580">
    <property type="entry name" value="Nucleoside phosphorylase domain"/>
    <property type="match status" value="1"/>
</dbReference>
<dbReference type="HAMAP" id="MF_01963">
    <property type="entry name" value="MTAP"/>
    <property type="match status" value="1"/>
</dbReference>
<dbReference type="InterPro" id="IPR010044">
    <property type="entry name" value="MTAP"/>
</dbReference>
<dbReference type="InterPro" id="IPR000845">
    <property type="entry name" value="Nucleoside_phosphorylase_d"/>
</dbReference>
<dbReference type="InterPro" id="IPR035994">
    <property type="entry name" value="Nucleoside_phosphorylase_sf"/>
</dbReference>
<dbReference type="InterPro" id="IPR018099">
    <property type="entry name" value="Purine_phosphorylase-2_CS"/>
</dbReference>
<dbReference type="NCBIfam" id="TIGR01694">
    <property type="entry name" value="MTAP"/>
    <property type="match status" value="1"/>
</dbReference>
<dbReference type="PANTHER" id="PTHR42679">
    <property type="entry name" value="S-METHYL-5'-THIOADENOSINE PHOSPHORYLASE"/>
    <property type="match status" value="1"/>
</dbReference>
<dbReference type="PANTHER" id="PTHR42679:SF2">
    <property type="entry name" value="S-METHYL-5'-THIOADENOSINE PHOSPHORYLASE"/>
    <property type="match status" value="1"/>
</dbReference>
<dbReference type="Pfam" id="PF01048">
    <property type="entry name" value="PNP_UDP_1"/>
    <property type="match status" value="1"/>
</dbReference>
<dbReference type="SUPFAM" id="SSF53167">
    <property type="entry name" value="Purine and uridine phosphorylases"/>
    <property type="match status" value="1"/>
</dbReference>
<dbReference type="PROSITE" id="PS01240">
    <property type="entry name" value="PNP_MTAP_2"/>
    <property type="match status" value="1"/>
</dbReference>
<organism>
    <name type="scientific">Mycosarcoma maydis</name>
    <name type="common">Corn smut fungus</name>
    <name type="synonym">Ustilago maydis</name>
    <dbReference type="NCBI Taxonomy" id="5270"/>
    <lineage>
        <taxon>Eukaryota</taxon>
        <taxon>Fungi</taxon>
        <taxon>Dikarya</taxon>
        <taxon>Basidiomycota</taxon>
        <taxon>Ustilaginomycotina</taxon>
        <taxon>Ustilaginomycetes</taxon>
        <taxon>Ustilaginales</taxon>
        <taxon>Ustilaginaceae</taxon>
        <taxon>Mycosarcoma</taxon>
    </lineage>
</organism>
<gene>
    <name type="ORF">UMAG_10466</name>
</gene>
<protein>
    <recommendedName>
        <fullName evidence="1">S-methyl-5'-thioadenosine phosphorylase</fullName>
        <ecNumber evidence="1">2.4.2.28</ecNumber>
    </recommendedName>
    <alternativeName>
        <fullName evidence="1">5'-methylthioadenosine phosphorylase</fullName>
        <shortName evidence="1">MTA phosphorylase</shortName>
        <shortName evidence="1">MTAP</shortName>
        <shortName evidence="1">MTAPase</shortName>
    </alternativeName>
</protein>